<dbReference type="EMBL" id="AC020922">
    <property type="status" value="NOT_ANNOTATED_CDS"/>
    <property type="molecule type" value="Genomic_DNA"/>
</dbReference>
<dbReference type="EMBL" id="BC052596">
    <property type="status" value="NOT_ANNOTATED_CDS"/>
    <property type="molecule type" value="mRNA"/>
</dbReference>
<dbReference type="CCDS" id="CCDS54323.1"/>
<dbReference type="RefSeq" id="NP_001177693.1">
    <property type="nucleotide sequence ID" value="NM_001190764.2"/>
</dbReference>
<dbReference type="SMR" id="C9JI98"/>
<dbReference type="BioGRID" id="132746">
    <property type="interactions" value="3"/>
</dbReference>
<dbReference type="FunCoup" id="C9JI98">
    <property type="interactions" value="1"/>
</dbReference>
<dbReference type="STRING" id="9606.ENSP00000416154"/>
<dbReference type="iPTMnet" id="C9JI98"/>
<dbReference type="PhosphoSitePlus" id="C9JI98"/>
<dbReference type="SwissPalm" id="C9JI98"/>
<dbReference type="BioMuta" id="TMEM238"/>
<dbReference type="jPOST" id="C9JI98"/>
<dbReference type="MassIVE" id="C9JI98"/>
<dbReference type="PaxDb" id="9606-ENSP00000416154"/>
<dbReference type="PeptideAtlas" id="C9JI98"/>
<dbReference type="ProteomicsDB" id="10307"/>
<dbReference type="Pumba" id="C9JI98"/>
<dbReference type="Antibodypedia" id="81708">
    <property type="antibodies" value="1 antibodies from 1 providers"/>
</dbReference>
<dbReference type="DNASU" id="388564"/>
<dbReference type="Ensembl" id="ENST00000444469.4">
    <property type="protein sequence ID" value="ENSP00000416154.2"/>
    <property type="gene ID" value="ENSG00000233493.4"/>
</dbReference>
<dbReference type="GeneID" id="388564"/>
<dbReference type="KEGG" id="hsa:388564"/>
<dbReference type="MANE-Select" id="ENST00000444469.4">
    <property type="protein sequence ID" value="ENSP00000416154.2"/>
    <property type="RefSeq nucleotide sequence ID" value="NM_001190764.2"/>
    <property type="RefSeq protein sequence ID" value="NP_001177693.1"/>
</dbReference>
<dbReference type="UCSC" id="uc002qku.4">
    <property type="organism name" value="human"/>
</dbReference>
<dbReference type="AGR" id="HGNC:40042"/>
<dbReference type="CTD" id="388564"/>
<dbReference type="GeneCards" id="TMEM238"/>
<dbReference type="HGNC" id="HGNC:40042">
    <property type="gene designation" value="TMEM238"/>
</dbReference>
<dbReference type="HPA" id="ENSG00000233493">
    <property type="expression patterns" value="Tissue enhanced (intestine, stomach)"/>
</dbReference>
<dbReference type="neXtProt" id="NX_C9JI98"/>
<dbReference type="VEuPathDB" id="HostDB:ENSG00000233493"/>
<dbReference type="eggNOG" id="ENOG502S3VR">
    <property type="taxonomic scope" value="Eukaryota"/>
</dbReference>
<dbReference type="GeneTree" id="ENSGT00940000162720"/>
<dbReference type="HOGENOM" id="CLU_127999_0_0_1"/>
<dbReference type="InParanoid" id="C9JI98"/>
<dbReference type="OMA" id="FYGRCAI"/>
<dbReference type="OrthoDB" id="9047238at2759"/>
<dbReference type="PAN-GO" id="C9JI98">
    <property type="GO annotations" value="0 GO annotations based on evolutionary models"/>
</dbReference>
<dbReference type="PhylomeDB" id="C9JI98"/>
<dbReference type="TreeFam" id="TF339060"/>
<dbReference type="PathwayCommons" id="C9JI98"/>
<dbReference type="BioGRID-ORCS" id="388564">
    <property type="hits" value="10 hits in 1143 CRISPR screens"/>
</dbReference>
<dbReference type="ChiTaRS" id="TMEM238">
    <property type="organism name" value="human"/>
</dbReference>
<dbReference type="Pharos" id="C9JI98">
    <property type="development level" value="Tdark"/>
</dbReference>
<dbReference type="PRO" id="PR:C9JI98"/>
<dbReference type="Proteomes" id="UP000005640">
    <property type="component" value="Chromosome 19"/>
</dbReference>
<dbReference type="RNAct" id="C9JI98">
    <property type="molecule type" value="protein"/>
</dbReference>
<dbReference type="Bgee" id="ENSG00000233493">
    <property type="expression patterns" value="Expressed in mucosa of transverse colon and 90 other cell types or tissues"/>
</dbReference>
<dbReference type="GO" id="GO:0016020">
    <property type="term" value="C:membrane"/>
    <property type="evidence" value="ECO:0007669"/>
    <property type="project" value="UniProtKB-SubCell"/>
</dbReference>
<dbReference type="InterPro" id="IPR029365">
    <property type="entry name" value="TMEM238"/>
</dbReference>
<dbReference type="PANTHER" id="PTHR28613">
    <property type="entry name" value="SI:CH211-232M10.4-RELATED"/>
    <property type="match status" value="1"/>
</dbReference>
<dbReference type="PANTHER" id="PTHR28613:SF5">
    <property type="entry name" value="TRANSMEMBRANE PROTEIN 238"/>
    <property type="match status" value="1"/>
</dbReference>
<dbReference type="Pfam" id="PF15125">
    <property type="entry name" value="TMEM238"/>
    <property type="match status" value="1"/>
</dbReference>
<proteinExistence type="evidence at protein level"/>
<name>TM238_HUMAN</name>
<evidence type="ECO:0000255" key="1"/>
<evidence type="ECO:0000256" key="2">
    <source>
        <dbReference type="SAM" id="MobiDB-lite"/>
    </source>
</evidence>
<evidence type="ECO:0000305" key="3"/>
<evidence type="ECO:0007744" key="4">
    <source>
    </source>
</evidence>
<organism>
    <name type="scientific">Homo sapiens</name>
    <name type="common">Human</name>
    <dbReference type="NCBI Taxonomy" id="9606"/>
    <lineage>
        <taxon>Eukaryota</taxon>
        <taxon>Metazoa</taxon>
        <taxon>Chordata</taxon>
        <taxon>Craniata</taxon>
        <taxon>Vertebrata</taxon>
        <taxon>Euteleostomi</taxon>
        <taxon>Mammalia</taxon>
        <taxon>Eutheria</taxon>
        <taxon>Euarchontoglires</taxon>
        <taxon>Primates</taxon>
        <taxon>Haplorrhini</taxon>
        <taxon>Catarrhini</taxon>
        <taxon>Hominidae</taxon>
        <taxon>Homo</taxon>
    </lineage>
</organism>
<protein>
    <recommendedName>
        <fullName>Transmembrane protein 238</fullName>
    </recommendedName>
</protein>
<keyword id="KW-0472">Membrane</keyword>
<keyword id="KW-0597">Phosphoprotein</keyword>
<keyword id="KW-1267">Proteomics identification</keyword>
<keyword id="KW-1185">Reference proteome</keyword>
<keyword id="KW-0812">Transmembrane</keyword>
<keyword id="KW-1133">Transmembrane helix</keyword>
<comment type="subcellular location">
    <subcellularLocation>
        <location evidence="3">Membrane</location>
        <topology evidence="3">Multi-pass membrane protein</topology>
    </subcellularLocation>
</comment>
<reference key="1">
    <citation type="journal article" date="2004" name="Nature">
        <title>The DNA sequence and biology of human chromosome 19.</title>
        <authorList>
            <person name="Grimwood J."/>
            <person name="Gordon L.A."/>
            <person name="Olsen A.S."/>
            <person name="Terry A."/>
            <person name="Schmutz J."/>
            <person name="Lamerdin J.E."/>
            <person name="Hellsten U."/>
            <person name="Goodstein D."/>
            <person name="Couronne O."/>
            <person name="Tran-Gyamfi M."/>
            <person name="Aerts A."/>
            <person name="Altherr M."/>
            <person name="Ashworth L."/>
            <person name="Bajorek E."/>
            <person name="Black S."/>
            <person name="Branscomb E."/>
            <person name="Caenepeel S."/>
            <person name="Carrano A.V."/>
            <person name="Caoile C."/>
            <person name="Chan Y.M."/>
            <person name="Christensen M."/>
            <person name="Cleland C.A."/>
            <person name="Copeland A."/>
            <person name="Dalin E."/>
            <person name="Dehal P."/>
            <person name="Denys M."/>
            <person name="Detter J.C."/>
            <person name="Escobar J."/>
            <person name="Flowers D."/>
            <person name="Fotopulos D."/>
            <person name="Garcia C."/>
            <person name="Georgescu A.M."/>
            <person name="Glavina T."/>
            <person name="Gomez M."/>
            <person name="Gonzales E."/>
            <person name="Groza M."/>
            <person name="Hammon N."/>
            <person name="Hawkins T."/>
            <person name="Haydu L."/>
            <person name="Ho I."/>
            <person name="Huang W."/>
            <person name="Israni S."/>
            <person name="Jett J."/>
            <person name="Kadner K."/>
            <person name="Kimball H."/>
            <person name="Kobayashi A."/>
            <person name="Larionov V."/>
            <person name="Leem S.-H."/>
            <person name="Lopez F."/>
            <person name="Lou Y."/>
            <person name="Lowry S."/>
            <person name="Malfatti S."/>
            <person name="Martinez D."/>
            <person name="McCready P.M."/>
            <person name="Medina C."/>
            <person name="Morgan J."/>
            <person name="Nelson K."/>
            <person name="Nolan M."/>
            <person name="Ovcharenko I."/>
            <person name="Pitluck S."/>
            <person name="Pollard M."/>
            <person name="Popkie A.P."/>
            <person name="Predki P."/>
            <person name="Quan G."/>
            <person name="Ramirez L."/>
            <person name="Rash S."/>
            <person name="Retterer J."/>
            <person name="Rodriguez A."/>
            <person name="Rogers S."/>
            <person name="Salamov A."/>
            <person name="Salazar A."/>
            <person name="She X."/>
            <person name="Smith D."/>
            <person name="Slezak T."/>
            <person name="Solovyev V."/>
            <person name="Thayer N."/>
            <person name="Tice H."/>
            <person name="Tsai M."/>
            <person name="Ustaszewska A."/>
            <person name="Vo N."/>
            <person name="Wagner M."/>
            <person name="Wheeler J."/>
            <person name="Wu K."/>
            <person name="Xie G."/>
            <person name="Yang J."/>
            <person name="Dubchak I."/>
            <person name="Furey T.S."/>
            <person name="DeJong P."/>
            <person name="Dickson M."/>
            <person name="Gordon D."/>
            <person name="Eichler E.E."/>
            <person name="Pennacchio L.A."/>
            <person name="Richardson P."/>
            <person name="Stubbs L."/>
            <person name="Rokhsar D.S."/>
            <person name="Myers R.M."/>
            <person name="Rubin E.M."/>
            <person name="Lucas S.M."/>
        </authorList>
    </citation>
    <scope>NUCLEOTIDE SEQUENCE [LARGE SCALE GENOMIC DNA]</scope>
</reference>
<reference key="2">
    <citation type="journal article" date="2004" name="Genome Res.">
        <title>The status, quality, and expansion of the NIH full-length cDNA project: the Mammalian Gene Collection (MGC).</title>
        <authorList>
            <consortium name="The MGC Project Team"/>
        </authorList>
    </citation>
    <scope>NUCLEOTIDE SEQUENCE [LARGE SCALE MRNA] OF 9-176</scope>
    <source>
        <tissue>Mammary carcinoma</tissue>
    </source>
</reference>
<reference key="3">
    <citation type="journal article" date="2008" name="Proc. Natl. Acad. Sci. U.S.A.">
        <title>A quantitative atlas of mitotic phosphorylation.</title>
        <authorList>
            <person name="Dephoure N."/>
            <person name="Zhou C."/>
            <person name="Villen J."/>
            <person name="Beausoleil S.A."/>
            <person name="Bakalarski C.E."/>
            <person name="Elledge S.J."/>
            <person name="Gygi S.P."/>
        </authorList>
    </citation>
    <scope>PHOSPHORYLATION [LARGE SCALE ANALYSIS] AT SER-175</scope>
    <scope>IDENTIFICATION BY MASS SPECTROMETRY [LARGE SCALE ANALYSIS]</scope>
    <source>
        <tissue>Cervix carcinoma</tissue>
    </source>
</reference>
<feature type="chain" id="PRO_0000413540" description="Transmembrane protein 238">
    <location>
        <begin position="1"/>
        <end position="176"/>
    </location>
</feature>
<feature type="topological domain" description="Cytoplasmic" evidence="1">
    <location>
        <begin position="1"/>
        <end position="36"/>
    </location>
</feature>
<feature type="transmembrane region" description="Helical" evidence="1">
    <location>
        <begin position="37"/>
        <end position="57"/>
    </location>
</feature>
<feature type="topological domain" description="Extracellular" evidence="1">
    <location>
        <begin position="58"/>
        <end position="69"/>
    </location>
</feature>
<feature type="transmembrane region" description="Helical" evidence="1">
    <location>
        <begin position="70"/>
        <end position="90"/>
    </location>
</feature>
<feature type="topological domain" description="Cytoplasmic" evidence="1">
    <location>
        <begin position="91"/>
        <end position="176"/>
    </location>
</feature>
<feature type="region of interest" description="Disordered" evidence="2">
    <location>
        <begin position="1"/>
        <end position="22"/>
    </location>
</feature>
<feature type="region of interest" description="Disordered" evidence="2">
    <location>
        <begin position="124"/>
        <end position="157"/>
    </location>
</feature>
<feature type="compositionally biased region" description="Low complexity" evidence="2">
    <location>
        <begin position="9"/>
        <end position="22"/>
    </location>
</feature>
<feature type="compositionally biased region" description="Low complexity" evidence="2">
    <location>
        <begin position="124"/>
        <end position="137"/>
    </location>
</feature>
<feature type="modified residue" description="Phosphoserine" evidence="4">
    <location>
        <position position="175"/>
    </location>
</feature>
<feature type="sequence conflict" description="In Ref. 2; BC052596." evidence="3" ref="2">
    <original>P</original>
    <variation>S</variation>
    <location>
        <position position="14"/>
    </location>
</feature>
<sequence length="176" mass="18040">MAAAPAVCASQGSPPGAPSAPAAAPAPAAGLGRCRMALLLAVALDVAGMAALLTGVFAQLQVRGRDFGDLLIYSGALLVFLSLLGWILWYTGNIEISRQELERDYGLRPSALARLARKLSRRWSAPAAAGQRPAPGSRRARRAARAPPPPAAGSRRVRLQLATLEAGPGAAGAGSE</sequence>
<gene>
    <name type="primary">TMEM238</name>
</gene>
<accession>C9JI98</accession>